<gene>
    <name evidence="1" type="primary">ispH</name>
    <name type="ordered locus">GM21_0994</name>
</gene>
<proteinExistence type="inferred from homology"/>
<reference key="1">
    <citation type="submission" date="2009-07" db="EMBL/GenBank/DDBJ databases">
        <title>Complete sequence of Geobacter sp. M21.</title>
        <authorList>
            <consortium name="US DOE Joint Genome Institute"/>
            <person name="Lucas S."/>
            <person name="Copeland A."/>
            <person name="Lapidus A."/>
            <person name="Glavina del Rio T."/>
            <person name="Dalin E."/>
            <person name="Tice H."/>
            <person name="Bruce D."/>
            <person name="Goodwin L."/>
            <person name="Pitluck S."/>
            <person name="Saunders E."/>
            <person name="Brettin T."/>
            <person name="Detter J.C."/>
            <person name="Han C."/>
            <person name="Larimer F."/>
            <person name="Land M."/>
            <person name="Hauser L."/>
            <person name="Kyrpides N."/>
            <person name="Ovchinnikova G."/>
            <person name="Lovley D."/>
        </authorList>
    </citation>
    <scope>NUCLEOTIDE SEQUENCE [LARGE SCALE GENOMIC DNA]</scope>
    <source>
        <strain>M21</strain>
    </source>
</reference>
<evidence type="ECO:0000255" key="1">
    <source>
        <dbReference type="HAMAP-Rule" id="MF_00191"/>
    </source>
</evidence>
<sequence length="283" mass="30579">MQVILAKHAGFCFGVKRATQLAFEAADTGSETYTLGPIIHSPQVVQRLEEMGVIPVEDVSEVETGGTIIIRSHGVAAEELEAAVRANLEVVDATCPFVKKAQEHVATLSKEGYDIVVVGDAVHPEVQGIVSYAAGRVYVVSSDKDVERLPRMSKIGIVAQTTQSFEHLHDVVTACLARGGETRVYNTICDATAVRQDEAKKLAGAVDCMVVIGGFNSANTKRLAQICRELLPRTHHVETACQIDEQWFKGVEKVGVTAGASTPKWIIDEVIDRISAIDKDKIS</sequence>
<accession>C6E2B3</accession>
<feature type="chain" id="PRO_1000204004" description="4-hydroxy-3-methylbut-2-enyl diphosphate reductase">
    <location>
        <begin position="1"/>
        <end position="283"/>
    </location>
</feature>
<feature type="active site" description="Proton donor" evidence="1">
    <location>
        <position position="125"/>
    </location>
</feature>
<feature type="binding site" evidence="1">
    <location>
        <position position="12"/>
    </location>
    <ligand>
        <name>[4Fe-4S] cluster</name>
        <dbReference type="ChEBI" id="CHEBI:49883"/>
    </ligand>
</feature>
<feature type="binding site" evidence="1">
    <location>
        <position position="40"/>
    </location>
    <ligand>
        <name>(2E)-4-hydroxy-3-methylbut-2-enyl diphosphate</name>
        <dbReference type="ChEBI" id="CHEBI:128753"/>
    </ligand>
</feature>
<feature type="binding site" evidence="1">
    <location>
        <position position="40"/>
    </location>
    <ligand>
        <name>dimethylallyl diphosphate</name>
        <dbReference type="ChEBI" id="CHEBI:57623"/>
    </ligand>
</feature>
<feature type="binding site" evidence="1">
    <location>
        <position position="40"/>
    </location>
    <ligand>
        <name>isopentenyl diphosphate</name>
        <dbReference type="ChEBI" id="CHEBI:128769"/>
    </ligand>
</feature>
<feature type="binding site" evidence="1">
    <location>
        <position position="73"/>
    </location>
    <ligand>
        <name>(2E)-4-hydroxy-3-methylbut-2-enyl diphosphate</name>
        <dbReference type="ChEBI" id="CHEBI:128753"/>
    </ligand>
</feature>
<feature type="binding site" evidence="1">
    <location>
        <position position="73"/>
    </location>
    <ligand>
        <name>dimethylallyl diphosphate</name>
        <dbReference type="ChEBI" id="CHEBI:57623"/>
    </ligand>
</feature>
<feature type="binding site" evidence="1">
    <location>
        <position position="73"/>
    </location>
    <ligand>
        <name>isopentenyl diphosphate</name>
        <dbReference type="ChEBI" id="CHEBI:128769"/>
    </ligand>
</feature>
<feature type="binding site" evidence="1">
    <location>
        <position position="95"/>
    </location>
    <ligand>
        <name>[4Fe-4S] cluster</name>
        <dbReference type="ChEBI" id="CHEBI:49883"/>
    </ligand>
</feature>
<feature type="binding site" evidence="1">
    <location>
        <position position="123"/>
    </location>
    <ligand>
        <name>(2E)-4-hydroxy-3-methylbut-2-enyl diphosphate</name>
        <dbReference type="ChEBI" id="CHEBI:128753"/>
    </ligand>
</feature>
<feature type="binding site" evidence="1">
    <location>
        <position position="123"/>
    </location>
    <ligand>
        <name>dimethylallyl diphosphate</name>
        <dbReference type="ChEBI" id="CHEBI:57623"/>
    </ligand>
</feature>
<feature type="binding site" evidence="1">
    <location>
        <position position="123"/>
    </location>
    <ligand>
        <name>isopentenyl diphosphate</name>
        <dbReference type="ChEBI" id="CHEBI:128769"/>
    </ligand>
</feature>
<feature type="binding site" evidence="1">
    <location>
        <position position="161"/>
    </location>
    <ligand>
        <name>(2E)-4-hydroxy-3-methylbut-2-enyl diphosphate</name>
        <dbReference type="ChEBI" id="CHEBI:128753"/>
    </ligand>
</feature>
<feature type="binding site" evidence="1">
    <location>
        <position position="189"/>
    </location>
    <ligand>
        <name>[4Fe-4S] cluster</name>
        <dbReference type="ChEBI" id="CHEBI:49883"/>
    </ligand>
</feature>
<feature type="binding site" evidence="1">
    <location>
        <position position="217"/>
    </location>
    <ligand>
        <name>(2E)-4-hydroxy-3-methylbut-2-enyl diphosphate</name>
        <dbReference type="ChEBI" id="CHEBI:128753"/>
    </ligand>
</feature>
<feature type="binding site" evidence="1">
    <location>
        <position position="217"/>
    </location>
    <ligand>
        <name>dimethylallyl diphosphate</name>
        <dbReference type="ChEBI" id="CHEBI:57623"/>
    </ligand>
</feature>
<feature type="binding site" evidence="1">
    <location>
        <position position="217"/>
    </location>
    <ligand>
        <name>isopentenyl diphosphate</name>
        <dbReference type="ChEBI" id="CHEBI:128769"/>
    </ligand>
</feature>
<feature type="binding site" evidence="1">
    <location>
        <position position="219"/>
    </location>
    <ligand>
        <name>(2E)-4-hydroxy-3-methylbut-2-enyl diphosphate</name>
        <dbReference type="ChEBI" id="CHEBI:128753"/>
    </ligand>
</feature>
<feature type="binding site" evidence="1">
    <location>
        <position position="219"/>
    </location>
    <ligand>
        <name>dimethylallyl diphosphate</name>
        <dbReference type="ChEBI" id="CHEBI:57623"/>
    </ligand>
</feature>
<feature type="binding site" evidence="1">
    <location>
        <position position="219"/>
    </location>
    <ligand>
        <name>isopentenyl diphosphate</name>
        <dbReference type="ChEBI" id="CHEBI:128769"/>
    </ligand>
</feature>
<feature type="binding site" evidence="1">
    <location>
        <position position="261"/>
    </location>
    <ligand>
        <name>(2E)-4-hydroxy-3-methylbut-2-enyl diphosphate</name>
        <dbReference type="ChEBI" id="CHEBI:128753"/>
    </ligand>
</feature>
<feature type="binding site" evidence="1">
    <location>
        <position position="261"/>
    </location>
    <ligand>
        <name>dimethylallyl diphosphate</name>
        <dbReference type="ChEBI" id="CHEBI:57623"/>
    </ligand>
</feature>
<feature type="binding site" evidence="1">
    <location>
        <position position="261"/>
    </location>
    <ligand>
        <name>isopentenyl diphosphate</name>
        <dbReference type="ChEBI" id="CHEBI:128769"/>
    </ligand>
</feature>
<comment type="function">
    <text evidence="1">Catalyzes the conversion of 1-hydroxy-2-methyl-2-(E)-butenyl 4-diphosphate (HMBPP) into a mixture of isopentenyl diphosphate (IPP) and dimethylallyl diphosphate (DMAPP). Acts in the terminal step of the DOXP/MEP pathway for isoprenoid precursor biosynthesis.</text>
</comment>
<comment type="catalytic activity">
    <reaction evidence="1">
        <text>isopentenyl diphosphate + 2 oxidized [2Fe-2S]-[ferredoxin] + H2O = (2E)-4-hydroxy-3-methylbut-2-enyl diphosphate + 2 reduced [2Fe-2S]-[ferredoxin] + 2 H(+)</text>
        <dbReference type="Rhea" id="RHEA:24488"/>
        <dbReference type="Rhea" id="RHEA-COMP:10000"/>
        <dbReference type="Rhea" id="RHEA-COMP:10001"/>
        <dbReference type="ChEBI" id="CHEBI:15377"/>
        <dbReference type="ChEBI" id="CHEBI:15378"/>
        <dbReference type="ChEBI" id="CHEBI:33737"/>
        <dbReference type="ChEBI" id="CHEBI:33738"/>
        <dbReference type="ChEBI" id="CHEBI:128753"/>
        <dbReference type="ChEBI" id="CHEBI:128769"/>
        <dbReference type="EC" id="1.17.7.4"/>
    </reaction>
</comment>
<comment type="catalytic activity">
    <reaction evidence="1">
        <text>dimethylallyl diphosphate + 2 oxidized [2Fe-2S]-[ferredoxin] + H2O = (2E)-4-hydroxy-3-methylbut-2-enyl diphosphate + 2 reduced [2Fe-2S]-[ferredoxin] + 2 H(+)</text>
        <dbReference type="Rhea" id="RHEA:24825"/>
        <dbReference type="Rhea" id="RHEA-COMP:10000"/>
        <dbReference type="Rhea" id="RHEA-COMP:10001"/>
        <dbReference type="ChEBI" id="CHEBI:15377"/>
        <dbReference type="ChEBI" id="CHEBI:15378"/>
        <dbReference type="ChEBI" id="CHEBI:33737"/>
        <dbReference type="ChEBI" id="CHEBI:33738"/>
        <dbReference type="ChEBI" id="CHEBI:57623"/>
        <dbReference type="ChEBI" id="CHEBI:128753"/>
        <dbReference type="EC" id="1.17.7.4"/>
    </reaction>
</comment>
<comment type="cofactor">
    <cofactor evidence="1">
        <name>[4Fe-4S] cluster</name>
        <dbReference type="ChEBI" id="CHEBI:49883"/>
    </cofactor>
    <text evidence="1">Binds 1 [4Fe-4S] cluster per subunit.</text>
</comment>
<comment type="pathway">
    <text evidence="1">Isoprenoid biosynthesis; dimethylallyl diphosphate biosynthesis; dimethylallyl diphosphate from (2E)-4-hydroxy-3-methylbutenyl diphosphate: step 1/1.</text>
</comment>
<comment type="pathway">
    <text evidence="1">Isoprenoid biosynthesis; isopentenyl diphosphate biosynthesis via DXP pathway; isopentenyl diphosphate from 1-deoxy-D-xylulose 5-phosphate: step 6/6.</text>
</comment>
<comment type="similarity">
    <text evidence="1">Belongs to the IspH family.</text>
</comment>
<name>ISPH_GEOSM</name>
<protein>
    <recommendedName>
        <fullName evidence="1">4-hydroxy-3-methylbut-2-enyl diphosphate reductase</fullName>
        <shortName evidence="1">HMBPP reductase</shortName>
        <ecNumber evidence="1">1.17.7.4</ecNumber>
    </recommendedName>
</protein>
<organism>
    <name type="scientific">Geobacter sp. (strain M21)</name>
    <dbReference type="NCBI Taxonomy" id="443144"/>
    <lineage>
        <taxon>Bacteria</taxon>
        <taxon>Pseudomonadati</taxon>
        <taxon>Thermodesulfobacteriota</taxon>
        <taxon>Desulfuromonadia</taxon>
        <taxon>Geobacterales</taxon>
        <taxon>Geobacteraceae</taxon>
        <taxon>Geobacter</taxon>
    </lineage>
</organism>
<dbReference type="EC" id="1.17.7.4" evidence="1"/>
<dbReference type="EMBL" id="CP001661">
    <property type="protein sequence ID" value="ACT17059.1"/>
    <property type="molecule type" value="Genomic_DNA"/>
</dbReference>
<dbReference type="SMR" id="C6E2B3"/>
<dbReference type="STRING" id="443144.GM21_0994"/>
<dbReference type="KEGG" id="gem:GM21_0994"/>
<dbReference type="eggNOG" id="COG0761">
    <property type="taxonomic scope" value="Bacteria"/>
</dbReference>
<dbReference type="HOGENOM" id="CLU_027486_0_1_7"/>
<dbReference type="OrthoDB" id="9804068at2"/>
<dbReference type="UniPathway" id="UPA00056">
    <property type="reaction ID" value="UER00097"/>
</dbReference>
<dbReference type="UniPathway" id="UPA00059">
    <property type="reaction ID" value="UER00105"/>
</dbReference>
<dbReference type="GO" id="GO:0051539">
    <property type="term" value="F:4 iron, 4 sulfur cluster binding"/>
    <property type="evidence" value="ECO:0007669"/>
    <property type="project" value="UniProtKB-UniRule"/>
</dbReference>
<dbReference type="GO" id="GO:0051745">
    <property type="term" value="F:4-hydroxy-3-methylbut-2-enyl diphosphate reductase activity"/>
    <property type="evidence" value="ECO:0007669"/>
    <property type="project" value="UniProtKB-UniRule"/>
</dbReference>
<dbReference type="GO" id="GO:0046872">
    <property type="term" value="F:metal ion binding"/>
    <property type="evidence" value="ECO:0007669"/>
    <property type="project" value="UniProtKB-KW"/>
</dbReference>
<dbReference type="GO" id="GO:0050992">
    <property type="term" value="P:dimethylallyl diphosphate biosynthetic process"/>
    <property type="evidence" value="ECO:0007669"/>
    <property type="project" value="UniProtKB-UniRule"/>
</dbReference>
<dbReference type="GO" id="GO:0019288">
    <property type="term" value="P:isopentenyl diphosphate biosynthetic process, methylerythritol 4-phosphate pathway"/>
    <property type="evidence" value="ECO:0007669"/>
    <property type="project" value="UniProtKB-UniRule"/>
</dbReference>
<dbReference type="GO" id="GO:0016114">
    <property type="term" value="P:terpenoid biosynthetic process"/>
    <property type="evidence" value="ECO:0007669"/>
    <property type="project" value="UniProtKB-UniRule"/>
</dbReference>
<dbReference type="CDD" id="cd13944">
    <property type="entry name" value="lytB_ispH"/>
    <property type="match status" value="1"/>
</dbReference>
<dbReference type="Gene3D" id="3.40.50.11270">
    <property type="match status" value="1"/>
</dbReference>
<dbReference type="Gene3D" id="3.40.1010.20">
    <property type="entry name" value="4-hydroxy-3-methylbut-2-enyl diphosphate reductase, catalytic domain"/>
    <property type="match status" value="2"/>
</dbReference>
<dbReference type="HAMAP" id="MF_00191">
    <property type="entry name" value="IspH"/>
    <property type="match status" value="1"/>
</dbReference>
<dbReference type="InterPro" id="IPR003451">
    <property type="entry name" value="LytB/IspH"/>
</dbReference>
<dbReference type="NCBIfam" id="TIGR00216">
    <property type="entry name" value="ispH_lytB"/>
    <property type="match status" value="1"/>
</dbReference>
<dbReference type="NCBIfam" id="NF002187">
    <property type="entry name" value="PRK01045.1-1"/>
    <property type="match status" value="1"/>
</dbReference>
<dbReference type="PANTHER" id="PTHR30426">
    <property type="entry name" value="4-HYDROXY-3-METHYLBUT-2-ENYL DIPHOSPHATE REDUCTASE"/>
    <property type="match status" value="1"/>
</dbReference>
<dbReference type="PANTHER" id="PTHR30426:SF0">
    <property type="entry name" value="4-HYDROXY-3-METHYLBUT-2-ENYL DIPHOSPHATE REDUCTASE"/>
    <property type="match status" value="1"/>
</dbReference>
<dbReference type="Pfam" id="PF02401">
    <property type="entry name" value="LYTB"/>
    <property type="match status" value="1"/>
</dbReference>
<keyword id="KW-0004">4Fe-4S</keyword>
<keyword id="KW-0408">Iron</keyword>
<keyword id="KW-0411">Iron-sulfur</keyword>
<keyword id="KW-0414">Isoprene biosynthesis</keyword>
<keyword id="KW-0479">Metal-binding</keyword>
<keyword id="KW-0560">Oxidoreductase</keyword>